<keyword id="KW-0328">Glycosyltransferase</keyword>
<keyword id="KW-0460">Magnesium</keyword>
<keyword id="KW-0665">Pyrimidine biosynthesis</keyword>
<keyword id="KW-0808">Transferase</keyword>
<comment type="function">
    <text evidence="1">Catalyzes the transfer of a ribosyl phosphate group from 5-phosphoribose 1-diphosphate to orotate, leading to the formation of orotidine monophosphate (OMP).</text>
</comment>
<comment type="catalytic activity">
    <reaction evidence="1">
        <text>orotidine 5'-phosphate + diphosphate = orotate + 5-phospho-alpha-D-ribose 1-diphosphate</text>
        <dbReference type="Rhea" id="RHEA:10380"/>
        <dbReference type="ChEBI" id="CHEBI:30839"/>
        <dbReference type="ChEBI" id="CHEBI:33019"/>
        <dbReference type="ChEBI" id="CHEBI:57538"/>
        <dbReference type="ChEBI" id="CHEBI:58017"/>
        <dbReference type="EC" id="2.4.2.10"/>
    </reaction>
</comment>
<comment type="cofactor">
    <cofactor evidence="1">
        <name>Mg(2+)</name>
        <dbReference type="ChEBI" id="CHEBI:18420"/>
    </cofactor>
</comment>
<comment type="pathway">
    <text evidence="1">Pyrimidine metabolism; UMP biosynthesis via de novo pathway; UMP from orotate: step 1/2.</text>
</comment>
<comment type="subunit">
    <text evidence="1">Homodimer.</text>
</comment>
<comment type="similarity">
    <text evidence="1">Belongs to the purine/pyrimidine phosphoribosyltransferase family. PyrE subfamily.</text>
</comment>
<dbReference type="EC" id="2.4.2.10" evidence="1"/>
<dbReference type="EMBL" id="AF058713">
    <property type="protein sequence ID" value="AAD47891.1"/>
    <property type="molecule type" value="Genomic_DNA"/>
</dbReference>
<dbReference type="EMBL" id="AJ248286">
    <property type="protein sequence ID" value="CAB50015.1"/>
    <property type="molecule type" value="Genomic_DNA"/>
</dbReference>
<dbReference type="EMBL" id="HE613800">
    <property type="protein sequence ID" value="CCE70518.1"/>
    <property type="molecule type" value="Genomic_DNA"/>
</dbReference>
<dbReference type="PIR" id="B75089">
    <property type="entry name" value="B75089"/>
</dbReference>
<dbReference type="PIR" id="T47129">
    <property type="entry name" value="T47129"/>
</dbReference>
<dbReference type="RefSeq" id="WP_010868222.1">
    <property type="nucleotide sequence ID" value="NC_000868.1"/>
</dbReference>
<dbReference type="SMR" id="P0CL79"/>
<dbReference type="STRING" id="272844.PAB2430"/>
<dbReference type="KEGG" id="pab:PAB2430"/>
<dbReference type="PATRIC" id="fig|272844.11.peg.1161"/>
<dbReference type="eggNOG" id="arCOG00029">
    <property type="taxonomic scope" value="Archaea"/>
</dbReference>
<dbReference type="HOGENOM" id="CLU_074878_2_0_2"/>
<dbReference type="OrthoDB" id="9089at2157"/>
<dbReference type="PhylomeDB" id="P0CL79"/>
<dbReference type="UniPathway" id="UPA00070">
    <property type="reaction ID" value="UER00119"/>
</dbReference>
<dbReference type="Proteomes" id="UP000000810">
    <property type="component" value="Chromosome"/>
</dbReference>
<dbReference type="Proteomes" id="UP000009139">
    <property type="component" value="Chromosome"/>
</dbReference>
<dbReference type="GO" id="GO:0000287">
    <property type="term" value="F:magnesium ion binding"/>
    <property type="evidence" value="ECO:0007669"/>
    <property type="project" value="UniProtKB-UniRule"/>
</dbReference>
<dbReference type="GO" id="GO:0004588">
    <property type="term" value="F:orotate phosphoribosyltransferase activity"/>
    <property type="evidence" value="ECO:0007669"/>
    <property type="project" value="UniProtKB-UniRule"/>
</dbReference>
<dbReference type="GO" id="GO:0044205">
    <property type="term" value="P:'de novo' UMP biosynthetic process"/>
    <property type="evidence" value="ECO:0007669"/>
    <property type="project" value="UniProtKB-UniRule"/>
</dbReference>
<dbReference type="GO" id="GO:0019856">
    <property type="term" value="P:pyrimidine nucleobase biosynthetic process"/>
    <property type="evidence" value="ECO:0007669"/>
    <property type="project" value="TreeGrafter"/>
</dbReference>
<dbReference type="CDD" id="cd06223">
    <property type="entry name" value="PRTases_typeI"/>
    <property type="match status" value="1"/>
</dbReference>
<dbReference type="Gene3D" id="3.40.50.2020">
    <property type="match status" value="1"/>
</dbReference>
<dbReference type="HAMAP" id="MF_01208">
    <property type="entry name" value="PyrE"/>
    <property type="match status" value="1"/>
</dbReference>
<dbReference type="InterPro" id="IPR023031">
    <property type="entry name" value="OPRT"/>
</dbReference>
<dbReference type="InterPro" id="IPR004467">
    <property type="entry name" value="Or_phspho_trans_dom"/>
</dbReference>
<dbReference type="InterPro" id="IPR000836">
    <property type="entry name" value="PRibTrfase_dom"/>
</dbReference>
<dbReference type="InterPro" id="IPR029057">
    <property type="entry name" value="PRTase-like"/>
</dbReference>
<dbReference type="NCBIfam" id="TIGR00336">
    <property type="entry name" value="pyrE"/>
    <property type="match status" value="1"/>
</dbReference>
<dbReference type="PANTHER" id="PTHR19278">
    <property type="entry name" value="OROTATE PHOSPHORIBOSYLTRANSFERASE"/>
    <property type="match status" value="1"/>
</dbReference>
<dbReference type="PANTHER" id="PTHR19278:SF9">
    <property type="entry name" value="URIDINE 5'-MONOPHOSPHATE SYNTHASE"/>
    <property type="match status" value="1"/>
</dbReference>
<dbReference type="Pfam" id="PF00156">
    <property type="entry name" value="Pribosyltran"/>
    <property type="match status" value="1"/>
</dbReference>
<dbReference type="SUPFAM" id="SSF53271">
    <property type="entry name" value="PRTase-like"/>
    <property type="match status" value="1"/>
</dbReference>
<reference key="1">
    <citation type="journal article" date="1999" name="Mol. Gen. Genet.">
        <title>Isolation and characterization of pyrimidine auxotrophs, and molecular cloning of the pyrE gene from the hyperthermophilic archaeon Pyrococcus abyssi.</title>
        <authorList>
            <person name="Watrin L."/>
            <person name="Lucas S."/>
            <person name="Purcarea C."/>
            <person name="Legrain C."/>
            <person name="Prieur D."/>
        </authorList>
    </citation>
    <scope>NUCLEOTIDE SEQUENCE [GENOMIC DNA]</scope>
    <source>
        <strain>GE5 / Orsay</strain>
    </source>
</reference>
<reference key="2">
    <citation type="journal article" date="2003" name="Mol. Microbiol.">
        <title>An integrated analysis of the genome of the hyperthermophilic archaeon Pyrococcus abyssi.</title>
        <authorList>
            <person name="Cohen G.N."/>
            <person name="Barbe V."/>
            <person name="Flament D."/>
            <person name="Galperin M."/>
            <person name="Heilig R."/>
            <person name="Lecompte O."/>
            <person name="Poch O."/>
            <person name="Prieur D."/>
            <person name="Querellou J."/>
            <person name="Ripp R."/>
            <person name="Thierry J.-C."/>
            <person name="Van der Oost J."/>
            <person name="Weissenbach J."/>
            <person name="Zivanovic Y."/>
            <person name="Forterre P."/>
        </authorList>
    </citation>
    <scope>NUCLEOTIDE SEQUENCE [LARGE SCALE GENOMIC DNA]</scope>
    <source>
        <strain>GE5 / Orsay</strain>
    </source>
</reference>
<reference key="3">
    <citation type="journal article" date="2012" name="Curr. Microbiol.">
        <title>Re-annotation of two hyperthermophilic archaea Pyrococcus abyssi GE5 and Pyrococcus furiosus DSM 3638.</title>
        <authorList>
            <person name="Gao J."/>
            <person name="Wang J."/>
        </authorList>
    </citation>
    <scope>GENOME REANNOTATION</scope>
    <source>
        <strain>GE5 / Orsay</strain>
    </source>
</reference>
<gene>
    <name evidence="1" type="primary">pyrE</name>
    <name type="ordered locus">PYRAB11040</name>
    <name type="ORF">PAB2430</name>
</gene>
<name>PYRE_PYRAB</name>
<proteinExistence type="inferred from homology"/>
<accession>P0CL79</accession>
<accession>G8ZJQ9</accession>
<accession>P56814</accession>
<sequence length="182" mass="19886">MKEELVKLIIDSGCIKFGHFILTSGKESNYYIDIKSLITNPKALKLIAKMIKEESRKLGIEYDKVAGPELGAVPIATALSLETDKPLLIIRKKKKEHGTGKLIEGEISPGDRVLLVEDVTTTGGSVIRAAKILKEHGAEVVGIFVVVDREEGARENIEKEGFKLYPLVLVSDLFEAAGVSKD</sequence>
<protein>
    <recommendedName>
        <fullName evidence="1">Orotate phosphoribosyltransferase</fullName>
        <shortName evidence="1">OPRT</shortName>
        <shortName evidence="1">OPRTase</shortName>
        <ecNumber evidence="1">2.4.2.10</ecNumber>
    </recommendedName>
</protein>
<evidence type="ECO:0000255" key="1">
    <source>
        <dbReference type="HAMAP-Rule" id="MF_01208"/>
    </source>
</evidence>
<evidence type="ECO:0000305" key="2"/>
<feature type="chain" id="PRO_0000407284" description="Orotate phosphoribosyltransferase">
    <location>
        <begin position="1"/>
        <end position="182"/>
    </location>
</feature>
<feature type="binding site" evidence="1">
    <location>
        <position position="91"/>
    </location>
    <ligand>
        <name>5-phospho-alpha-D-ribose 1-diphosphate</name>
        <dbReference type="ChEBI" id="CHEBI:58017"/>
        <note>ligand shared between dimeric partners</note>
    </ligand>
</feature>
<feature type="binding site" description="in other chain" evidence="1">
    <location>
        <position position="92"/>
    </location>
    <ligand>
        <name>5-phospho-alpha-D-ribose 1-diphosphate</name>
        <dbReference type="ChEBI" id="CHEBI:58017"/>
        <note>ligand shared between dimeric partners</note>
    </ligand>
</feature>
<feature type="binding site" evidence="1">
    <location>
        <position position="95"/>
    </location>
    <ligand>
        <name>5-phospho-alpha-D-ribose 1-diphosphate</name>
        <dbReference type="ChEBI" id="CHEBI:58017"/>
        <note>ligand shared between dimeric partners</note>
    </ligand>
</feature>
<feature type="binding site" evidence="1">
    <location>
        <position position="97"/>
    </location>
    <ligand>
        <name>5-phospho-alpha-D-ribose 1-diphosphate</name>
        <dbReference type="ChEBI" id="CHEBI:58017"/>
        <note>ligand shared between dimeric partners</note>
    </ligand>
</feature>
<feature type="binding site" description="in other chain" evidence="1">
    <location>
        <begin position="117"/>
        <end position="125"/>
    </location>
    <ligand>
        <name>5-phospho-alpha-D-ribose 1-diphosphate</name>
        <dbReference type="ChEBI" id="CHEBI:58017"/>
        <note>ligand shared between dimeric partners</note>
    </ligand>
</feature>
<feature type="binding site" evidence="1">
    <location>
        <position position="121"/>
    </location>
    <ligand>
        <name>orotate</name>
        <dbReference type="ChEBI" id="CHEBI:30839"/>
    </ligand>
</feature>
<feature type="binding site" evidence="1">
    <location>
        <position position="149"/>
    </location>
    <ligand>
        <name>orotate</name>
        <dbReference type="ChEBI" id="CHEBI:30839"/>
    </ligand>
</feature>
<feature type="sequence conflict" description="In Ref. 1; AAD47891." evidence="2" ref="1">
    <original>A</original>
    <variation>P</variation>
    <location>
        <position position="130"/>
    </location>
</feature>
<organism>
    <name type="scientific">Pyrococcus abyssi (strain GE5 / Orsay)</name>
    <dbReference type="NCBI Taxonomy" id="272844"/>
    <lineage>
        <taxon>Archaea</taxon>
        <taxon>Methanobacteriati</taxon>
        <taxon>Methanobacteriota</taxon>
        <taxon>Thermococci</taxon>
        <taxon>Thermococcales</taxon>
        <taxon>Thermococcaceae</taxon>
        <taxon>Pyrococcus</taxon>
    </lineage>
</organism>